<name>KN7L_ORYSJ</name>
<protein>
    <recommendedName>
        <fullName evidence="5">Kinesin-like protein KIN-7L</fullName>
    </recommendedName>
</protein>
<gene>
    <name evidence="5" type="primary">KIN7L</name>
    <name evidence="7" type="ordered locus">Os11g0552600</name>
    <name evidence="6" type="ordered locus">LOC_Os11g35090</name>
    <name evidence="8" type="ORF">OsJ_34241</name>
</gene>
<sequence length="642" mass="71669">MEKISVAVRFRPPTTAAPAADQSPSSTGGDREWRVDDDTRITLLHRSAPVPGASFAFDHVFDGAATNERIYGVLVRSLIRAAVDGFNGTAFAYGQTSSGKTFTMNGSADHPGIIPLAVRDVFDTAREVSDREFLIRVSYMEIYNEEINDLLTLGSEKLPIHESLERGVYVSGLREEIVNSAEQVFKLLELGEANRHFGETNMNVRSSRSHTIFRMVIESSAKNHMDSGDAIRVSVLNLVDLAGSERIAKTGAGGVRLKEGKHINKSLMILGNVINKLSENGKQRGHIPYRDSKLTRILQPALGGNAKTSIICTAAPEEIHVEETRGTLQFASRAKCVSNCAQVNEILTDAALLKRQKQEIEELRKKLQGSHSEVLEQVILKQRNDMHKSELERDRLAMELDEERRLRETLEHRLAEQQKMLDGISNTSISPDQFTDSIQFESLKTPTSKERPAEFVASRANYSKDVEFSPIPENLGTVADEDLWMQLNKGCVTDLEMLEMTPGFKCAPSLADDKASVATPDEEPIDARCQRLEKDCTADRQQLEDSKAWRAALEEERDTLKRENSSLLDALAKARQDADHLVADRLEALRELDMEKSRMDELKQEIKLFSQAFSLRQGQLTSLYTKSKAIVENCKTSQLALP</sequence>
<evidence type="ECO:0000255" key="1"/>
<evidence type="ECO:0000255" key="2">
    <source>
        <dbReference type="PROSITE-ProRule" id="PRU00283"/>
    </source>
</evidence>
<evidence type="ECO:0000256" key="3">
    <source>
        <dbReference type="SAM" id="MobiDB-lite"/>
    </source>
</evidence>
<evidence type="ECO:0000303" key="4">
    <source>
    </source>
</evidence>
<evidence type="ECO:0000305" key="5"/>
<evidence type="ECO:0000312" key="6">
    <source>
        <dbReference type="EMBL" id="ABA94250.1"/>
    </source>
</evidence>
<evidence type="ECO:0000312" key="7">
    <source>
        <dbReference type="EMBL" id="BAT14435.1"/>
    </source>
</evidence>
<evidence type="ECO:0000312" key="8">
    <source>
        <dbReference type="EMBL" id="EAZ18722.1"/>
    </source>
</evidence>
<accession>Q2R2P7</accession>
<accession>Q0IS68</accession>
<organism>
    <name type="scientific">Oryza sativa subsp. japonica</name>
    <name type="common">Rice</name>
    <dbReference type="NCBI Taxonomy" id="39947"/>
    <lineage>
        <taxon>Eukaryota</taxon>
        <taxon>Viridiplantae</taxon>
        <taxon>Streptophyta</taxon>
        <taxon>Embryophyta</taxon>
        <taxon>Tracheophyta</taxon>
        <taxon>Spermatophyta</taxon>
        <taxon>Magnoliopsida</taxon>
        <taxon>Liliopsida</taxon>
        <taxon>Poales</taxon>
        <taxon>Poaceae</taxon>
        <taxon>BOP clade</taxon>
        <taxon>Oryzoideae</taxon>
        <taxon>Oryzeae</taxon>
        <taxon>Oryzinae</taxon>
        <taxon>Oryza</taxon>
        <taxon>Oryza sativa</taxon>
    </lineage>
</organism>
<comment type="similarity">
    <text evidence="4">Belongs to the TRAFAC class myosin-kinesin ATPase superfamily. Kinesin family. KIN-7 subfamily.</text>
</comment>
<comment type="sequence caution" evidence="5">
    <conflict type="erroneous gene model prediction">
        <sequence resource="EMBL-CDS" id="BAF28447"/>
    </conflict>
</comment>
<comment type="sequence caution" evidence="5">
    <conflict type="erroneous gene model prediction">
        <sequence resource="EMBL-CDS" id="BAT14435"/>
    </conflict>
</comment>
<reference key="1">
    <citation type="journal article" date="2005" name="BMC Biol.">
        <title>The sequence of rice chromosomes 11 and 12, rich in disease resistance genes and recent gene duplications.</title>
        <authorList>
            <consortium name="The rice chromosomes 11 and 12 sequencing consortia"/>
        </authorList>
    </citation>
    <scope>NUCLEOTIDE SEQUENCE [LARGE SCALE GENOMIC DNA]</scope>
    <source>
        <strain>cv. Nipponbare</strain>
    </source>
</reference>
<reference key="2">
    <citation type="journal article" date="2005" name="Nature">
        <title>The map-based sequence of the rice genome.</title>
        <authorList>
            <consortium name="International rice genome sequencing project (IRGSP)"/>
        </authorList>
    </citation>
    <scope>NUCLEOTIDE SEQUENCE [LARGE SCALE GENOMIC DNA]</scope>
    <source>
        <strain>cv. Nipponbare</strain>
    </source>
</reference>
<reference key="3">
    <citation type="journal article" date="2008" name="Nucleic Acids Res.">
        <title>The rice annotation project database (RAP-DB): 2008 update.</title>
        <authorList>
            <consortium name="The rice annotation project (RAP)"/>
        </authorList>
    </citation>
    <scope>GENOME REANNOTATION</scope>
    <source>
        <strain>cv. Nipponbare</strain>
    </source>
</reference>
<reference key="4">
    <citation type="journal article" date="2013" name="Rice">
        <title>Improvement of the Oryza sativa Nipponbare reference genome using next generation sequence and optical map data.</title>
        <authorList>
            <person name="Kawahara Y."/>
            <person name="de la Bastide M."/>
            <person name="Hamilton J.P."/>
            <person name="Kanamori H."/>
            <person name="McCombie W.R."/>
            <person name="Ouyang S."/>
            <person name="Schwartz D.C."/>
            <person name="Tanaka T."/>
            <person name="Wu J."/>
            <person name="Zhou S."/>
            <person name="Childs K.L."/>
            <person name="Davidson R.M."/>
            <person name="Lin H."/>
            <person name="Quesada-Ocampo L."/>
            <person name="Vaillancourt B."/>
            <person name="Sakai H."/>
            <person name="Lee S.S."/>
            <person name="Kim J."/>
            <person name="Numa H."/>
            <person name="Itoh T."/>
            <person name="Buell C.R."/>
            <person name="Matsumoto T."/>
        </authorList>
    </citation>
    <scope>GENOME REANNOTATION</scope>
    <source>
        <strain>cv. Nipponbare</strain>
    </source>
</reference>
<reference key="5">
    <citation type="journal article" date="2005" name="PLoS Biol.">
        <title>The genomes of Oryza sativa: a history of duplications.</title>
        <authorList>
            <person name="Yu J."/>
            <person name="Wang J."/>
            <person name="Lin W."/>
            <person name="Li S."/>
            <person name="Li H."/>
            <person name="Zhou J."/>
            <person name="Ni P."/>
            <person name="Dong W."/>
            <person name="Hu S."/>
            <person name="Zeng C."/>
            <person name="Zhang J."/>
            <person name="Zhang Y."/>
            <person name="Li R."/>
            <person name="Xu Z."/>
            <person name="Li S."/>
            <person name="Li X."/>
            <person name="Zheng H."/>
            <person name="Cong L."/>
            <person name="Lin L."/>
            <person name="Yin J."/>
            <person name="Geng J."/>
            <person name="Li G."/>
            <person name="Shi J."/>
            <person name="Liu J."/>
            <person name="Lv H."/>
            <person name="Li J."/>
            <person name="Wang J."/>
            <person name="Deng Y."/>
            <person name="Ran L."/>
            <person name="Shi X."/>
            <person name="Wang X."/>
            <person name="Wu Q."/>
            <person name="Li C."/>
            <person name="Ren X."/>
            <person name="Wang J."/>
            <person name="Wang X."/>
            <person name="Li D."/>
            <person name="Liu D."/>
            <person name="Zhang X."/>
            <person name="Ji Z."/>
            <person name="Zhao W."/>
            <person name="Sun Y."/>
            <person name="Zhang Z."/>
            <person name="Bao J."/>
            <person name="Han Y."/>
            <person name="Dong L."/>
            <person name="Ji J."/>
            <person name="Chen P."/>
            <person name="Wu S."/>
            <person name="Liu J."/>
            <person name="Xiao Y."/>
            <person name="Bu D."/>
            <person name="Tan J."/>
            <person name="Yang L."/>
            <person name="Ye C."/>
            <person name="Zhang J."/>
            <person name="Xu J."/>
            <person name="Zhou Y."/>
            <person name="Yu Y."/>
            <person name="Zhang B."/>
            <person name="Zhuang S."/>
            <person name="Wei H."/>
            <person name="Liu B."/>
            <person name="Lei M."/>
            <person name="Yu H."/>
            <person name="Li Y."/>
            <person name="Xu H."/>
            <person name="Wei S."/>
            <person name="He X."/>
            <person name="Fang L."/>
            <person name="Zhang Z."/>
            <person name="Zhang Y."/>
            <person name="Huang X."/>
            <person name="Su Z."/>
            <person name="Tong W."/>
            <person name="Li J."/>
            <person name="Tong Z."/>
            <person name="Li S."/>
            <person name="Ye J."/>
            <person name="Wang L."/>
            <person name="Fang L."/>
            <person name="Lei T."/>
            <person name="Chen C.-S."/>
            <person name="Chen H.-C."/>
            <person name="Xu Z."/>
            <person name="Li H."/>
            <person name="Huang H."/>
            <person name="Zhang F."/>
            <person name="Xu H."/>
            <person name="Li N."/>
            <person name="Zhao C."/>
            <person name="Li S."/>
            <person name="Dong L."/>
            <person name="Huang Y."/>
            <person name="Li L."/>
            <person name="Xi Y."/>
            <person name="Qi Q."/>
            <person name="Li W."/>
            <person name="Zhang B."/>
            <person name="Hu W."/>
            <person name="Zhang Y."/>
            <person name="Tian X."/>
            <person name="Jiao Y."/>
            <person name="Liang X."/>
            <person name="Jin J."/>
            <person name="Gao L."/>
            <person name="Zheng W."/>
            <person name="Hao B."/>
            <person name="Liu S.-M."/>
            <person name="Wang W."/>
            <person name="Yuan L."/>
            <person name="Cao M."/>
            <person name="McDermott J."/>
            <person name="Samudrala R."/>
            <person name="Wang J."/>
            <person name="Wong G.K.-S."/>
            <person name="Yang H."/>
        </authorList>
    </citation>
    <scope>NUCLEOTIDE SEQUENCE [LARGE SCALE GENOMIC DNA]</scope>
    <source>
        <strain>cv. Nipponbare</strain>
    </source>
</reference>
<reference key="6">
    <citation type="journal article" date="2003" name="Science">
        <title>Collection, mapping, and annotation of over 28,000 cDNA clones from japonica rice.</title>
        <authorList>
            <consortium name="The rice full-length cDNA consortium"/>
        </authorList>
    </citation>
    <scope>NUCLEOTIDE SEQUENCE [LARGE SCALE MRNA] OF 275-642</scope>
    <source>
        <strain>cv. Nipponbare</strain>
    </source>
</reference>
<reference key="7">
    <citation type="journal article" date="2009" name="Ann. Bot.">
        <title>Evaluating the microtubule cytoskeleton and its interacting proteins in monocots by mining the rice genome.</title>
        <authorList>
            <person name="Guo L."/>
            <person name="Ho C.M."/>
            <person name="Kong Z."/>
            <person name="Lee Y.R."/>
            <person name="Qian Q."/>
            <person name="Liu B."/>
        </authorList>
    </citation>
    <scope>GENE FAMILY</scope>
    <scope>NOMENCLATURE</scope>
</reference>
<dbReference type="EMBL" id="DP000010">
    <property type="protein sequence ID" value="ABA94250.1"/>
    <property type="molecule type" value="Genomic_DNA"/>
</dbReference>
<dbReference type="EMBL" id="AP008217">
    <property type="protein sequence ID" value="BAF28447.1"/>
    <property type="status" value="ALT_SEQ"/>
    <property type="molecule type" value="Genomic_DNA"/>
</dbReference>
<dbReference type="EMBL" id="AP014967">
    <property type="protein sequence ID" value="BAT14435.1"/>
    <property type="status" value="ALT_SEQ"/>
    <property type="molecule type" value="Genomic_DNA"/>
</dbReference>
<dbReference type="EMBL" id="CM000148">
    <property type="protein sequence ID" value="EAZ18722.1"/>
    <property type="molecule type" value="Genomic_DNA"/>
</dbReference>
<dbReference type="EMBL" id="AK106372">
    <property type="status" value="NOT_ANNOTATED_CDS"/>
    <property type="molecule type" value="mRNA"/>
</dbReference>
<dbReference type="RefSeq" id="XP_015615574.1">
    <property type="nucleotide sequence ID" value="XM_015760088.1"/>
</dbReference>
<dbReference type="SMR" id="Q2R2P7"/>
<dbReference type="FunCoup" id="Q2R2P7">
    <property type="interactions" value="612"/>
</dbReference>
<dbReference type="STRING" id="39947.Q2R2P7"/>
<dbReference type="PaxDb" id="39947-Q2R2P7"/>
<dbReference type="KEGG" id="dosa:Os11g0552600"/>
<dbReference type="eggNOG" id="KOG0242">
    <property type="taxonomic scope" value="Eukaryota"/>
</dbReference>
<dbReference type="InParanoid" id="Q2R2P7"/>
<dbReference type="OrthoDB" id="3176171at2759"/>
<dbReference type="Proteomes" id="UP000000763">
    <property type="component" value="Chromosome 11"/>
</dbReference>
<dbReference type="Proteomes" id="UP000007752">
    <property type="component" value="Chromosome 11"/>
</dbReference>
<dbReference type="Proteomes" id="UP000059680">
    <property type="component" value="Chromosome 11"/>
</dbReference>
<dbReference type="GO" id="GO:0005874">
    <property type="term" value="C:microtubule"/>
    <property type="evidence" value="ECO:0007669"/>
    <property type="project" value="UniProtKB-KW"/>
</dbReference>
<dbReference type="GO" id="GO:0005524">
    <property type="term" value="F:ATP binding"/>
    <property type="evidence" value="ECO:0007669"/>
    <property type="project" value="UniProtKB-KW"/>
</dbReference>
<dbReference type="GO" id="GO:0008017">
    <property type="term" value="F:microtubule binding"/>
    <property type="evidence" value="ECO:0007669"/>
    <property type="project" value="InterPro"/>
</dbReference>
<dbReference type="GO" id="GO:0003777">
    <property type="term" value="F:microtubule motor activity"/>
    <property type="evidence" value="ECO:0007669"/>
    <property type="project" value="InterPro"/>
</dbReference>
<dbReference type="GO" id="GO:0007018">
    <property type="term" value="P:microtubule-based movement"/>
    <property type="evidence" value="ECO:0007669"/>
    <property type="project" value="InterPro"/>
</dbReference>
<dbReference type="CDD" id="cd01374">
    <property type="entry name" value="KISc_CENP_E"/>
    <property type="match status" value="1"/>
</dbReference>
<dbReference type="FunFam" id="3.40.850.10:FF:000026">
    <property type="entry name" value="Centromere-associated protein E"/>
    <property type="match status" value="1"/>
</dbReference>
<dbReference type="Gene3D" id="3.40.850.10">
    <property type="entry name" value="Kinesin motor domain"/>
    <property type="match status" value="1"/>
</dbReference>
<dbReference type="InterPro" id="IPR027640">
    <property type="entry name" value="Kinesin-like_fam"/>
</dbReference>
<dbReference type="InterPro" id="IPR019821">
    <property type="entry name" value="Kinesin_motor_CS"/>
</dbReference>
<dbReference type="InterPro" id="IPR001752">
    <property type="entry name" value="Kinesin_motor_dom"/>
</dbReference>
<dbReference type="InterPro" id="IPR036961">
    <property type="entry name" value="Kinesin_motor_dom_sf"/>
</dbReference>
<dbReference type="InterPro" id="IPR027417">
    <property type="entry name" value="P-loop_NTPase"/>
</dbReference>
<dbReference type="PANTHER" id="PTHR47968">
    <property type="entry name" value="CENTROMERE PROTEIN E"/>
    <property type="match status" value="1"/>
</dbReference>
<dbReference type="PANTHER" id="PTHR47968:SF36">
    <property type="entry name" value="KINESIN HEAVY CHAIN ISOFORM X1"/>
    <property type="match status" value="1"/>
</dbReference>
<dbReference type="Pfam" id="PF00225">
    <property type="entry name" value="Kinesin"/>
    <property type="match status" value="1"/>
</dbReference>
<dbReference type="PRINTS" id="PR00380">
    <property type="entry name" value="KINESINHEAVY"/>
</dbReference>
<dbReference type="SMART" id="SM00129">
    <property type="entry name" value="KISc"/>
    <property type="match status" value="1"/>
</dbReference>
<dbReference type="SUPFAM" id="SSF52540">
    <property type="entry name" value="P-loop containing nucleoside triphosphate hydrolases"/>
    <property type="match status" value="1"/>
</dbReference>
<dbReference type="PROSITE" id="PS00411">
    <property type="entry name" value="KINESIN_MOTOR_1"/>
    <property type="match status" value="1"/>
</dbReference>
<dbReference type="PROSITE" id="PS50067">
    <property type="entry name" value="KINESIN_MOTOR_2"/>
    <property type="match status" value="1"/>
</dbReference>
<feature type="chain" id="PRO_0000436633" description="Kinesin-like protein KIN-7L">
    <location>
        <begin position="1"/>
        <end position="642"/>
    </location>
</feature>
<feature type="domain" description="Kinesin motor" evidence="2">
    <location>
        <begin position="3"/>
        <end position="337"/>
    </location>
</feature>
<feature type="region of interest" description="Disordered" evidence="3">
    <location>
        <begin position="12"/>
        <end position="33"/>
    </location>
</feature>
<feature type="coiled-coil region" evidence="1">
    <location>
        <begin position="343"/>
        <end position="428"/>
    </location>
</feature>
<feature type="coiled-coil region" evidence="1">
    <location>
        <begin position="540"/>
        <end position="612"/>
    </location>
</feature>
<feature type="compositionally biased region" description="Low complexity" evidence="3">
    <location>
        <begin position="12"/>
        <end position="27"/>
    </location>
</feature>
<feature type="binding site" evidence="2">
    <location>
        <begin position="94"/>
        <end position="101"/>
    </location>
    <ligand>
        <name>ATP</name>
        <dbReference type="ChEBI" id="CHEBI:30616"/>
    </ligand>
</feature>
<keyword id="KW-0067">ATP-binding</keyword>
<keyword id="KW-0175">Coiled coil</keyword>
<keyword id="KW-0493">Microtubule</keyword>
<keyword id="KW-0505">Motor protein</keyword>
<keyword id="KW-0547">Nucleotide-binding</keyword>
<keyword id="KW-1185">Reference proteome</keyword>
<proteinExistence type="evidence at transcript level"/>